<organism>
    <name type="scientific">Rickettsia conorii (strain ATCC VR-613 / Malish 7)</name>
    <dbReference type="NCBI Taxonomy" id="272944"/>
    <lineage>
        <taxon>Bacteria</taxon>
        <taxon>Pseudomonadati</taxon>
        <taxon>Pseudomonadota</taxon>
        <taxon>Alphaproteobacteria</taxon>
        <taxon>Rickettsiales</taxon>
        <taxon>Rickettsiaceae</taxon>
        <taxon>Rickettsieae</taxon>
        <taxon>Rickettsia</taxon>
        <taxon>spotted fever group</taxon>
    </lineage>
</organism>
<dbReference type="EMBL" id="AE006914">
    <property type="protein sequence ID" value="AAL03040.1"/>
    <property type="molecule type" value="Genomic_DNA"/>
</dbReference>
<dbReference type="PIR" id="F97762">
    <property type="entry name" value="F97762"/>
</dbReference>
<dbReference type="RefSeq" id="WP_010977141.1">
    <property type="nucleotide sequence ID" value="NC_003103.1"/>
</dbReference>
<dbReference type="SMR" id="Q92IB8"/>
<dbReference type="GeneID" id="927627"/>
<dbReference type="KEGG" id="rco:RC0502"/>
<dbReference type="PATRIC" id="fig|272944.4.peg.573"/>
<dbReference type="HOGENOM" id="CLU_188451_0_0_5"/>
<dbReference type="Proteomes" id="UP000000816">
    <property type="component" value="Chromosome"/>
</dbReference>
<dbReference type="Gene3D" id="1.25.40.20">
    <property type="entry name" value="Ankyrin repeat-containing domain"/>
    <property type="match status" value="1"/>
</dbReference>
<dbReference type="InterPro" id="IPR002110">
    <property type="entry name" value="Ankyrin_rpt"/>
</dbReference>
<dbReference type="InterPro" id="IPR036770">
    <property type="entry name" value="Ankyrin_rpt-contain_sf"/>
</dbReference>
<dbReference type="SUPFAM" id="SSF48403">
    <property type="entry name" value="Ankyrin repeat"/>
    <property type="match status" value="1"/>
</dbReference>
<dbReference type="PROSITE" id="PS50297">
    <property type="entry name" value="ANK_REP_REGION"/>
    <property type="match status" value="1"/>
</dbReference>
<dbReference type="PROSITE" id="PS50088">
    <property type="entry name" value="ANK_REPEAT"/>
    <property type="match status" value="1"/>
</dbReference>
<keyword id="KW-0040">ANK repeat</keyword>
<protein>
    <recommendedName>
        <fullName>Putative ankyrin repeat protein RC0502</fullName>
    </recommendedName>
</protein>
<gene>
    <name type="ordered locus">RC0502</name>
</gene>
<name>Y502_RICCN</name>
<proteinExistence type="predicted"/>
<sequence length="70" mass="8041">MDVNTKDGKGRIPIHYATYSKQHEITQILILLQPGSEIDTVDNYGGTPFFYLLLKHESGQNKTLLDFFLR</sequence>
<feature type="chain" id="PRO_0000280927" description="Putative ankyrin repeat protein RC0502">
    <location>
        <begin position="1"/>
        <end position="70"/>
    </location>
</feature>
<feature type="repeat" description="ANK">
    <location>
        <begin position="9"/>
        <end position="43"/>
    </location>
</feature>
<accession>Q92IB8</accession>
<reference key="1">
    <citation type="journal article" date="2001" name="Science">
        <title>Mechanisms of evolution in Rickettsia conorii and R. prowazekii.</title>
        <authorList>
            <person name="Ogata H."/>
            <person name="Audic S."/>
            <person name="Renesto-Audiffren P."/>
            <person name="Fournier P.-E."/>
            <person name="Barbe V."/>
            <person name="Samson D."/>
            <person name="Roux V."/>
            <person name="Cossart P."/>
            <person name="Weissenbach J."/>
            <person name="Claverie J.-M."/>
            <person name="Raoult D."/>
        </authorList>
    </citation>
    <scope>NUCLEOTIDE SEQUENCE [LARGE SCALE GENOMIC DNA]</scope>
    <source>
        <strain>ATCC VR-613 / Malish 7</strain>
    </source>
</reference>